<keyword id="KW-0049">Antioxidant</keyword>
<keyword id="KW-0186">Copper</keyword>
<keyword id="KW-0963">Cytoplasm</keyword>
<keyword id="KW-1015">Disulfide bond</keyword>
<keyword id="KW-0479">Metal-binding</keyword>
<keyword id="KW-0560">Oxidoreductase</keyword>
<keyword id="KW-0862">Zinc</keyword>
<protein>
    <recommendedName>
        <fullName>Superoxide dismutase [Cu-Zn]</fullName>
        <ecNumber evidence="3">1.15.1.1</ecNumber>
    </recommendedName>
</protein>
<gene>
    <name type="primary">sod1</name>
</gene>
<reference key="1">
    <citation type="submission" date="2003-04" db="EMBL/GenBank/DDBJ databases">
        <title>Functional analysis of H2O2-generating systems in B. cinerea: the major Cu-Zn-SOD (BCSOD1) has impact on virulence on bean, whereas a glucose oxidase (BCGOD1) is dispensable.</title>
        <authorList>
            <person name="Rolke Y."/>
            <person name="Liu S."/>
            <person name="Quidde T."/>
            <person name="Williamson B."/>
            <person name="Schouten S."/>
            <person name="Weltring K."/>
            <person name="Siewers V."/>
            <person name="Tudzynski B."/>
            <person name="Tudzynski P."/>
        </authorList>
    </citation>
    <scope>NUCLEOTIDE SEQUENCE [GENOMIC DNA]</scope>
    <source>
        <strain>SAS56</strain>
    </source>
</reference>
<proteinExistence type="inferred from homology"/>
<evidence type="ECO:0000250" key="1">
    <source>
        <dbReference type="UniProtKB" id="P00442"/>
    </source>
</evidence>
<evidence type="ECO:0000250" key="2">
    <source>
        <dbReference type="UniProtKB" id="P00445"/>
    </source>
</evidence>
<evidence type="ECO:0000250" key="3">
    <source>
        <dbReference type="UniProtKB" id="P85978"/>
    </source>
</evidence>
<evidence type="ECO:0000256" key="4">
    <source>
        <dbReference type="SAM" id="MobiDB-lite"/>
    </source>
</evidence>
<evidence type="ECO:0000305" key="5"/>
<organism>
    <name type="scientific">Botryotinia fuckeliana</name>
    <name type="common">Noble rot fungus</name>
    <name type="synonym">Botrytis cinerea</name>
    <dbReference type="NCBI Taxonomy" id="40559"/>
    <lineage>
        <taxon>Eukaryota</taxon>
        <taxon>Fungi</taxon>
        <taxon>Dikarya</taxon>
        <taxon>Ascomycota</taxon>
        <taxon>Pezizomycotina</taxon>
        <taxon>Leotiomycetes</taxon>
        <taxon>Helotiales</taxon>
        <taxon>Sclerotiniaceae</taxon>
        <taxon>Botrytis</taxon>
    </lineage>
</organism>
<name>SODC_BOTFU</name>
<sequence>MVKAVATVRGDSKISGTVTFEQSEENSPTTITWNITGNDANAERGMHVHQFGDNTNGCTSAGPHFNPHGQTHGAPTDEVRHVGDLGNFKTDAQGNATGSVQDSHIKLIGPLSVIGRTVVVHSGTDDLGKGENEESKKTGNAGTRPACGVIGIAA</sequence>
<dbReference type="EC" id="1.15.1.1" evidence="3"/>
<dbReference type="EMBL" id="AJ555872">
    <property type="protein sequence ID" value="CAD88591.1"/>
    <property type="molecule type" value="Genomic_DNA"/>
</dbReference>
<dbReference type="SMR" id="Q70Q35"/>
<dbReference type="OMA" id="AQRGFHI"/>
<dbReference type="PHI-base" id="PHI:330"/>
<dbReference type="PHI-base" id="PHI:5588"/>
<dbReference type="GO" id="GO:0005829">
    <property type="term" value="C:cytosol"/>
    <property type="evidence" value="ECO:0007669"/>
    <property type="project" value="EnsemblFungi"/>
</dbReference>
<dbReference type="GO" id="GO:0005758">
    <property type="term" value="C:mitochondrial intermembrane space"/>
    <property type="evidence" value="ECO:0007669"/>
    <property type="project" value="EnsemblFungi"/>
</dbReference>
<dbReference type="GO" id="GO:0005634">
    <property type="term" value="C:nucleus"/>
    <property type="evidence" value="ECO:0007669"/>
    <property type="project" value="EnsemblFungi"/>
</dbReference>
<dbReference type="GO" id="GO:1902693">
    <property type="term" value="C:superoxide dismutase complex"/>
    <property type="evidence" value="ECO:0007669"/>
    <property type="project" value="EnsemblFungi"/>
</dbReference>
<dbReference type="GO" id="GO:0005507">
    <property type="term" value="F:copper ion binding"/>
    <property type="evidence" value="ECO:0007669"/>
    <property type="project" value="InterPro"/>
</dbReference>
<dbReference type="GO" id="GO:0016670">
    <property type="term" value="F:oxidoreductase activity, acting on a sulfur group of donors, oxygen as acceptor"/>
    <property type="evidence" value="ECO:0007669"/>
    <property type="project" value="EnsemblFungi"/>
</dbReference>
<dbReference type="GO" id="GO:0004784">
    <property type="term" value="F:superoxide dismutase activity"/>
    <property type="evidence" value="ECO:0007669"/>
    <property type="project" value="UniProtKB-EC"/>
</dbReference>
<dbReference type="GO" id="GO:0045454">
    <property type="term" value="P:cell redox homeostasis"/>
    <property type="evidence" value="ECO:0007669"/>
    <property type="project" value="EnsemblFungi"/>
</dbReference>
<dbReference type="GO" id="GO:0006825">
    <property type="term" value="P:copper ion transport"/>
    <property type="evidence" value="ECO:0007669"/>
    <property type="project" value="EnsemblFungi"/>
</dbReference>
<dbReference type="GO" id="GO:0031505">
    <property type="term" value="P:fungal-type cell wall organization"/>
    <property type="evidence" value="ECO:0007669"/>
    <property type="project" value="EnsemblFungi"/>
</dbReference>
<dbReference type="GO" id="GO:0006878">
    <property type="term" value="P:intracellular copper ion homeostasis"/>
    <property type="evidence" value="ECO:0007669"/>
    <property type="project" value="EnsemblFungi"/>
</dbReference>
<dbReference type="GO" id="GO:0006882">
    <property type="term" value="P:intracellular zinc ion homeostasis"/>
    <property type="evidence" value="ECO:0007669"/>
    <property type="project" value="EnsemblFungi"/>
</dbReference>
<dbReference type="GO" id="GO:1901856">
    <property type="term" value="P:negative regulation of cellular respiration"/>
    <property type="evidence" value="ECO:0007669"/>
    <property type="project" value="EnsemblFungi"/>
</dbReference>
<dbReference type="GO" id="GO:0045944">
    <property type="term" value="P:positive regulation of transcription by RNA polymerase II"/>
    <property type="evidence" value="ECO:0007669"/>
    <property type="project" value="EnsemblFungi"/>
</dbReference>
<dbReference type="GO" id="GO:0050821">
    <property type="term" value="P:protein stabilization"/>
    <property type="evidence" value="ECO:0007669"/>
    <property type="project" value="EnsemblFungi"/>
</dbReference>
<dbReference type="CDD" id="cd00305">
    <property type="entry name" value="Cu-Zn_Superoxide_Dismutase"/>
    <property type="match status" value="1"/>
</dbReference>
<dbReference type="FunFam" id="2.60.40.200:FF:000001">
    <property type="entry name" value="Superoxide dismutase [Cu-Zn]"/>
    <property type="match status" value="1"/>
</dbReference>
<dbReference type="Gene3D" id="2.60.40.200">
    <property type="entry name" value="Superoxide dismutase, copper/zinc binding domain"/>
    <property type="match status" value="1"/>
</dbReference>
<dbReference type="InterPro" id="IPR036423">
    <property type="entry name" value="SOD-like_Cu/Zn_dom_sf"/>
</dbReference>
<dbReference type="InterPro" id="IPR024134">
    <property type="entry name" value="SOD_Cu/Zn_/chaperone"/>
</dbReference>
<dbReference type="InterPro" id="IPR018152">
    <property type="entry name" value="SOD_Cu/Zn_BS"/>
</dbReference>
<dbReference type="InterPro" id="IPR001424">
    <property type="entry name" value="SOD_Cu_Zn_dom"/>
</dbReference>
<dbReference type="PANTHER" id="PTHR10003">
    <property type="entry name" value="SUPEROXIDE DISMUTASE CU-ZN -RELATED"/>
    <property type="match status" value="1"/>
</dbReference>
<dbReference type="Pfam" id="PF00080">
    <property type="entry name" value="Sod_Cu"/>
    <property type="match status" value="1"/>
</dbReference>
<dbReference type="PRINTS" id="PR00068">
    <property type="entry name" value="CUZNDISMTASE"/>
</dbReference>
<dbReference type="SUPFAM" id="SSF49329">
    <property type="entry name" value="Cu,Zn superoxide dismutase-like"/>
    <property type="match status" value="1"/>
</dbReference>
<dbReference type="PROSITE" id="PS00087">
    <property type="entry name" value="SOD_CU_ZN_1"/>
    <property type="match status" value="1"/>
</dbReference>
<dbReference type="PROSITE" id="PS00332">
    <property type="entry name" value="SOD_CU_ZN_2"/>
    <property type="match status" value="1"/>
</dbReference>
<accession>Q70Q35</accession>
<feature type="initiator methionine" description="Removed" evidence="2">
    <location>
        <position position="1"/>
    </location>
</feature>
<feature type="chain" id="PRO_0000164111" description="Superoxide dismutase [Cu-Zn]">
    <location>
        <begin position="2"/>
        <end position="154"/>
    </location>
</feature>
<feature type="region of interest" description="Disordered" evidence="4">
    <location>
        <begin position="124"/>
        <end position="144"/>
    </location>
</feature>
<feature type="compositionally biased region" description="Basic and acidic residues" evidence="4">
    <location>
        <begin position="124"/>
        <end position="137"/>
    </location>
</feature>
<feature type="binding site" evidence="2">
    <location>
        <position position="47"/>
    </location>
    <ligand>
        <name>Cu cation</name>
        <dbReference type="ChEBI" id="CHEBI:23378"/>
        <note>catalytic</note>
    </ligand>
</feature>
<feature type="binding site" evidence="2">
    <location>
        <position position="49"/>
    </location>
    <ligand>
        <name>Cu cation</name>
        <dbReference type="ChEBI" id="CHEBI:23378"/>
        <note>catalytic</note>
    </ligand>
</feature>
<feature type="binding site" evidence="2">
    <location>
        <position position="64"/>
    </location>
    <ligand>
        <name>Cu cation</name>
        <dbReference type="ChEBI" id="CHEBI:23378"/>
        <note>catalytic</note>
    </ligand>
</feature>
<feature type="binding site" evidence="2">
    <location>
        <position position="64"/>
    </location>
    <ligand>
        <name>Zn(2+)</name>
        <dbReference type="ChEBI" id="CHEBI:29105"/>
        <note>structural</note>
    </ligand>
</feature>
<feature type="binding site" evidence="2">
    <location>
        <position position="72"/>
    </location>
    <ligand>
        <name>Zn(2+)</name>
        <dbReference type="ChEBI" id="CHEBI:29105"/>
        <note>structural</note>
    </ligand>
</feature>
<feature type="binding site" evidence="2">
    <location>
        <position position="81"/>
    </location>
    <ligand>
        <name>Zn(2+)</name>
        <dbReference type="ChEBI" id="CHEBI:29105"/>
        <note>structural</note>
    </ligand>
</feature>
<feature type="binding site" evidence="2">
    <location>
        <position position="84"/>
    </location>
    <ligand>
        <name>Zn(2+)</name>
        <dbReference type="ChEBI" id="CHEBI:29105"/>
        <note>structural</note>
    </ligand>
</feature>
<feature type="binding site" evidence="2">
    <location>
        <position position="121"/>
    </location>
    <ligand>
        <name>Cu cation</name>
        <dbReference type="ChEBI" id="CHEBI:23378"/>
        <note>catalytic</note>
    </ligand>
</feature>
<feature type="binding site" evidence="2">
    <location>
        <position position="144"/>
    </location>
    <ligand>
        <name>substrate</name>
    </ligand>
</feature>
<feature type="disulfide bond" evidence="2">
    <location>
        <begin position="58"/>
        <end position="147"/>
    </location>
</feature>
<comment type="function">
    <text evidence="1">Destroys radicals which are normally produced within the cells and which are toxic to biological systems.</text>
</comment>
<comment type="catalytic activity">
    <reaction evidence="3">
        <text>2 superoxide + 2 H(+) = H2O2 + O2</text>
        <dbReference type="Rhea" id="RHEA:20696"/>
        <dbReference type="ChEBI" id="CHEBI:15378"/>
        <dbReference type="ChEBI" id="CHEBI:15379"/>
        <dbReference type="ChEBI" id="CHEBI:16240"/>
        <dbReference type="ChEBI" id="CHEBI:18421"/>
        <dbReference type="EC" id="1.15.1.1"/>
    </reaction>
</comment>
<comment type="cofactor">
    <cofactor evidence="2">
        <name>Cu cation</name>
        <dbReference type="ChEBI" id="CHEBI:23378"/>
    </cofactor>
    <text evidence="2">Binds 1 copper ion per subunit.</text>
</comment>
<comment type="cofactor">
    <cofactor evidence="2">
        <name>Zn(2+)</name>
        <dbReference type="ChEBI" id="CHEBI:29105"/>
    </cofactor>
    <text evidence="2">Binds 1 zinc ion per subunit.</text>
</comment>
<comment type="subunit">
    <text evidence="3">Homodimer.</text>
</comment>
<comment type="subcellular location">
    <subcellularLocation>
        <location evidence="2">Cytoplasm</location>
    </subcellularLocation>
</comment>
<comment type="similarity">
    <text evidence="5">Belongs to the Cu-Zn superoxide dismutase family.</text>
</comment>